<reference key="1">
    <citation type="journal article" date="2004" name="J. Biol. Chem.">
        <title>Methionine metabolism in plants: chloroplasts are autonomous for de novo methionine synthesis and can import S-adenosylmethionine from the cytosol.</title>
        <authorList>
            <person name="Ravanel S."/>
            <person name="Block M.A."/>
            <person name="Rippert P."/>
            <person name="Jabrin S."/>
            <person name="Curien G."/>
            <person name="Rebeille F."/>
            <person name="Douce R."/>
        </authorList>
    </citation>
    <scope>NUCLEOTIDE SEQUENCE [MRNA]</scope>
    <scope>FUNCTION</scope>
    <scope>BIOPHYSICOCHEMICAL PROPERTIES</scope>
    <scope>SUBCELLULAR LOCATION</scope>
    <scope>TISSUE SPECIFICITY</scope>
    <source>
        <strain>cv. Wassilewskija</strain>
    </source>
</reference>
<reference key="2">
    <citation type="journal article" date="2000" name="Nature">
        <title>Sequence and analysis of chromosome 3 of the plant Arabidopsis thaliana.</title>
        <authorList>
            <person name="Salanoubat M."/>
            <person name="Lemcke K."/>
            <person name="Rieger M."/>
            <person name="Ansorge W."/>
            <person name="Unseld M."/>
            <person name="Fartmann B."/>
            <person name="Valle G."/>
            <person name="Bloecker H."/>
            <person name="Perez-Alonso M."/>
            <person name="Obermaier B."/>
            <person name="Delseny M."/>
            <person name="Boutry M."/>
            <person name="Grivell L.A."/>
            <person name="Mache R."/>
            <person name="Puigdomenech P."/>
            <person name="De Simone V."/>
            <person name="Choisne N."/>
            <person name="Artiguenave F."/>
            <person name="Robert C."/>
            <person name="Brottier P."/>
            <person name="Wincker P."/>
            <person name="Cattolico L."/>
            <person name="Weissenbach J."/>
            <person name="Saurin W."/>
            <person name="Quetier F."/>
            <person name="Schaefer M."/>
            <person name="Mueller-Auer S."/>
            <person name="Gabel C."/>
            <person name="Fuchs M."/>
            <person name="Benes V."/>
            <person name="Wurmbach E."/>
            <person name="Drzonek H."/>
            <person name="Erfle H."/>
            <person name="Jordan N."/>
            <person name="Bangert S."/>
            <person name="Wiedelmann R."/>
            <person name="Kranz H."/>
            <person name="Voss H."/>
            <person name="Holland R."/>
            <person name="Brandt P."/>
            <person name="Nyakatura G."/>
            <person name="Vezzi A."/>
            <person name="D'Angelo M."/>
            <person name="Pallavicini A."/>
            <person name="Toppo S."/>
            <person name="Simionati B."/>
            <person name="Conrad A."/>
            <person name="Hornischer K."/>
            <person name="Kauer G."/>
            <person name="Loehnert T.-H."/>
            <person name="Nordsiek G."/>
            <person name="Reichelt J."/>
            <person name="Scharfe M."/>
            <person name="Schoen O."/>
            <person name="Bargues M."/>
            <person name="Terol J."/>
            <person name="Climent J."/>
            <person name="Navarro P."/>
            <person name="Collado C."/>
            <person name="Perez-Perez A."/>
            <person name="Ottenwaelder B."/>
            <person name="Duchemin D."/>
            <person name="Cooke R."/>
            <person name="Laudie M."/>
            <person name="Berger-Llauro C."/>
            <person name="Purnelle B."/>
            <person name="Masuy D."/>
            <person name="de Haan M."/>
            <person name="Maarse A.C."/>
            <person name="Alcaraz J.-P."/>
            <person name="Cottet A."/>
            <person name="Casacuberta E."/>
            <person name="Monfort A."/>
            <person name="Argiriou A."/>
            <person name="Flores M."/>
            <person name="Liguori R."/>
            <person name="Vitale D."/>
            <person name="Mannhaupt G."/>
            <person name="Haase D."/>
            <person name="Schoof H."/>
            <person name="Rudd S."/>
            <person name="Zaccaria P."/>
            <person name="Mewes H.-W."/>
            <person name="Mayer K.F.X."/>
            <person name="Kaul S."/>
            <person name="Town C.D."/>
            <person name="Koo H.L."/>
            <person name="Tallon L.J."/>
            <person name="Jenkins J."/>
            <person name="Rooney T."/>
            <person name="Rizzo M."/>
            <person name="Walts A."/>
            <person name="Utterback T."/>
            <person name="Fujii C.Y."/>
            <person name="Shea T.P."/>
            <person name="Creasy T.H."/>
            <person name="Haas B."/>
            <person name="Maiti R."/>
            <person name="Wu D."/>
            <person name="Peterson J."/>
            <person name="Van Aken S."/>
            <person name="Pai G."/>
            <person name="Militscher J."/>
            <person name="Sellers P."/>
            <person name="Gill J.E."/>
            <person name="Feldblyum T.V."/>
            <person name="Preuss D."/>
            <person name="Lin X."/>
            <person name="Nierman W.C."/>
            <person name="Salzberg S.L."/>
            <person name="White O."/>
            <person name="Venter J.C."/>
            <person name="Fraser C.M."/>
            <person name="Kaneko T."/>
            <person name="Nakamura Y."/>
            <person name="Sato S."/>
            <person name="Kato T."/>
            <person name="Asamizu E."/>
            <person name="Sasamoto S."/>
            <person name="Kimura T."/>
            <person name="Idesawa K."/>
            <person name="Kawashima K."/>
            <person name="Kishida Y."/>
            <person name="Kiyokawa C."/>
            <person name="Kohara M."/>
            <person name="Matsumoto M."/>
            <person name="Matsuno A."/>
            <person name="Muraki A."/>
            <person name="Nakayama S."/>
            <person name="Nakazaki N."/>
            <person name="Shinpo S."/>
            <person name="Takeuchi C."/>
            <person name="Wada T."/>
            <person name="Watanabe A."/>
            <person name="Yamada M."/>
            <person name="Yasuda M."/>
            <person name="Tabata S."/>
        </authorList>
    </citation>
    <scope>NUCLEOTIDE SEQUENCE [LARGE SCALE GENOMIC DNA]</scope>
    <source>
        <strain>cv. Columbia</strain>
    </source>
</reference>
<reference key="3">
    <citation type="journal article" date="2017" name="Plant J.">
        <title>Araport11: a complete reannotation of the Arabidopsis thaliana reference genome.</title>
        <authorList>
            <person name="Cheng C.Y."/>
            <person name="Krishnakumar V."/>
            <person name="Chan A.P."/>
            <person name="Thibaud-Nissen F."/>
            <person name="Schobel S."/>
            <person name="Town C.D."/>
        </authorList>
    </citation>
    <scope>GENOME REANNOTATION</scope>
    <source>
        <strain>cv. Columbia</strain>
    </source>
</reference>
<reference key="4">
    <citation type="journal article" date="2003" name="Science">
        <title>Empirical analysis of transcriptional activity in the Arabidopsis genome.</title>
        <authorList>
            <person name="Yamada K."/>
            <person name="Lim J."/>
            <person name="Dale J.M."/>
            <person name="Chen H."/>
            <person name="Shinn P."/>
            <person name="Palm C.J."/>
            <person name="Southwick A.M."/>
            <person name="Wu H.C."/>
            <person name="Kim C.J."/>
            <person name="Nguyen M."/>
            <person name="Pham P.K."/>
            <person name="Cheuk R.F."/>
            <person name="Karlin-Newmann G."/>
            <person name="Liu S.X."/>
            <person name="Lam B."/>
            <person name="Sakano H."/>
            <person name="Wu T."/>
            <person name="Yu G."/>
            <person name="Miranda M."/>
            <person name="Quach H.L."/>
            <person name="Tripp M."/>
            <person name="Chang C.H."/>
            <person name="Lee J.M."/>
            <person name="Toriumi M.J."/>
            <person name="Chan M.M."/>
            <person name="Tang C.C."/>
            <person name="Onodera C.S."/>
            <person name="Deng J.M."/>
            <person name="Akiyama K."/>
            <person name="Ansari Y."/>
            <person name="Arakawa T."/>
            <person name="Banh J."/>
            <person name="Banno F."/>
            <person name="Bowser L."/>
            <person name="Brooks S.Y."/>
            <person name="Carninci P."/>
            <person name="Chao Q."/>
            <person name="Choy N."/>
            <person name="Enju A."/>
            <person name="Goldsmith A.D."/>
            <person name="Gurjal M."/>
            <person name="Hansen N.F."/>
            <person name="Hayashizaki Y."/>
            <person name="Johnson-Hopson C."/>
            <person name="Hsuan V.W."/>
            <person name="Iida K."/>
            <person name="Karnes M."/>
            <person name="Khan S."/>
            <person name="Koesema E."/>
            <person name="Ishida J."/>
            <person name="Jiang P.X."/>
            <person name="Jones T."/>
            <person name="Kawai J."/>
            <person name="Kamiya A."/>
            <person name="Meyers C."/>
            <person name="Nakajima M."/>
            <person name="Narusaka M."/>
            <person name="Seki M."/>
            <person name="Sakurai T."/>
            <person name="Satou M."/>
            <person name="Tamse R."/>
            <person name="Vaysberg M."/>
            <person name="Wallender E.K."/>
            <person name="Wong C."/>
            <person name="Yamamura Y."/>
            <person name="Yuan S."/>
            <person name="Shinozaki K."/>
            <person name="Davis R.W."/>
            <person name="Theologis A."/>
            <person name="Ecker J.R."/>
        </authorList>
    </citation>
    <scope>NUCLEOTIDE SEQUENCE [LARGE SCALE MRNA]</scope>
    <source>
        <strain>cv. Columbia</strain>
    </source>
</reference>
<reference key="5">
    <citation type="submission" date="2002-03" db="EMBL/GenBank/DDBJ databases">
        <title>Full-length cDNA from Arabidopsis thaliana.</title>
        <authorList>
            <person name="Brover V.V."/>
            <person name="Troukhan M.E."/>
            <person name="Alexandrov N.A."/>
            <person name="Lu Y.-P."/>
            <person name="Flavell R.B."/>
            <person name="Feldmann K.A."/>
        </authorList>
    </citation>
    <scope>NUCLEOTIDE SEQUENCE [LARGE SCALE MRNA]</scope>
</reference>
<proteinExistence type="evidence at protein level"/>
<organism>
    <name type="scientific">Arabidopsis thaliana</name>
    <name type="common">Mouse-ear cress</name>
    <dbReference type="NCBI Taxonomy" id="3702"/>
    <lineage>
        <taxon>Eukaryota</taxon>
        <taxon>Viridiplantae</taxon>
        <taxon>Streptophyta</taxon>
        <taxon>Embryophyta</taxon>
        <taxon>Tracheophyta</taxon>
        <taxon>Spermatophyta</taxon>
        <taxon>Magnoliopsida</taxon>
        <taxon>eudicotyledons</taxon>
        <taxon>Gunneridae</taxon>
        <taxon>Pentapetalae</taxon>
        <taxon>rosids</taxon>
        <taxon>malvids</taxon>
        <taxon>Brassicales</taxon>
        <taxon>Brassicaceae</taxon>
        <taxon>Camelineae</taxon>
        <taxon>Arabidopsis</taxon>
    </lineage>
</organism>
<keyword id="KW-0028">Amino-acid biosynthesis</keyword>
<keyword id="KW-0963">Cytoplasm</keyword>
<keyword id="KW-0479">Metal-binding</keyword>
<keyword id="KW-0486">Methionine biosynthesis</keyword>
<keyword id="KW-0489">Methyltransferase</keyword>
<keyword id="KW-1185">Reference proteome</keyword>
<keyword id="KW-0808">Transferase</keyword>
<keyword id="KW-0862">Zinc</keyword>
<name>METE2_ARATH</name>
<evidence type="ECO:0000250" key="1"/>
<evidence type="ECO:0000250" key="2">
    <source>
        <dbReference type="UniProtKB" id="O50008"/>
    </source>
</evidence>
<evidence type="ECO:0000250" key="3">
    <source>
        <dbReference type="UniProtKB" id="P82610"/>
    </source>
</evidence>
<evidence type="ECO:0000269" key="4">
    <source>
    </source>
</evidence>
<evidence type="ECO:0000305" key="5"/>
<accession>Q9SRV5</accession>
<accession>Q94BN4</accession>
<feature type="chain" id="PRO_0000424356" description="5-methyltetrahydropteroyltriglutamate--homocysteine methyltransferase 2">
    <location>
        <begin position="1"/>
        <end position="765"/>
    </location>
</feature>
<feature type="active site" description="Proton donor" evidence="3">
    <location>
        <position position="701"/>
    </location>
</feature>
<feature type="binding site" evidence="3">
    <location>
        <position position="18"/>
    </location>
    <ligand>
        <name>5-methyltetrahydropteroyltri-L-glutamate</name>
        <dbReference type="ChEBI" id="CHEBI:58207"/>
    </ligand>
</feature>
<feature type="binding site" evidence="3">
    <location>
        <position position="116"/>
    </location>
    <ligand>
        <name>5-methyltetrahydropteroyltri-L-glutamate</name>
        <dbReference type="ChEBI" id="CHEBI:58207"/>
    </ligand>
</feature>
<feature type="binding site" evidence="3">
    <location>
        <begin position="437"/>
        <end position="439"/>
    </location>
    <ligand>
        <name>L-homocysteine</name>
        <dbReference type="ChEBI" id="CHEBI:58199"/>
    </ligand>
</feature>
<feature type="binding site" evidence="3">
    <location>
        <begin position="437"/>
        <end position="439"/>
    </location>
    <ligand>
        <name>L-methionine</name>
        <dbReference type="ChEBI" id="CHEBI:57844"/>
    </ligand>
</feature>
<feature type="binding site" evidence="3">
    <location>
        <position position="490"/>
    </location>
    <ligand>
        <name>L-homocysteine</name>
        <dbReference type="ChEBI" id="CHEBI:58199"/>
    </ligand>
</feature>
<feature type="binding site" evidence="3">
    <location>
        <position position="490"/>
    </location>
    <ligand>
        <name>L-methionine</name>
        <dbReference type="ChEBI" id="CHEBI:57844"/>
    </ligand>
</feature>
<feature type="binding site" evidence="3">
    <location>
        <position position="495"/>
    </location>
    <ligand>
        <name>5-methyltetrahydropteroyltri-L-glutamate</name>
        <dbReference type="ChEBI" id="CHEBI:58207"/>
    </ligand>
</feature>
<feature type="binding site" evidence="3">
    <location>
        <position position="518"/>
    </location>
    <ligand>
        <name>5-methyltetrahydropteroyltri-L-glutamate</name>
        <dbReference type="ChEBI" id="CHEBI:58207"/>
    </ligand>
</feature>
<feature type="binding site" evidence="2">
    <location>
        <begin position="521"/>
        <end position="522"/>
    </location>
    <ligand>
        <name>5-methyltetrahydropteroyltri-L-glutamate</name>
        <dbReference type="ChEBI" id="CHEBI:58207"/>
    </ligand>
</feature>
<feature type="binding site" evidence="3">
    <location>
        <position position="567"/>
    </location>
    <ligand>
        <name>5-methyltetrahydropteroyltri-L-glutamate</name>
        <dbReference type="ChEBI" id="CHEBI:58207"/>
    </ligand>
</feature>
<feature type="binding site" evidence="3">
    <location>
        <position position="605"/>
    </location>
    <ligand>
        <name>L-homocysteine</name>
        <dbReference type="ChEBI" id="CHEBI:58199"/>
    </ligand>
</feature>
<feature type="binding site" evidence="3">
    <location>
        <position position="605"/>
    </location>
    <ligand>
        <name>L-methionine</name>
        <dbReference type="ChEBI" id="CHEBI:57844"/>
    </ligand>
</feature>
<feature type="binding site" evidence="2">
    <location>
        <position position="647"/>
    </location>
    <ligand>
        <name>Zn(2+)</name>
        <dbReference type="ChEBI" id="CHEBI:29105"/>
        <label>1</label>
        <note>catalytic</note>
    </ligand>
</feature>
<feature type="binding site" evidence="2">
    <location>
        <position position="649"/>
    </location>
    <ligand>
        <name>Zn(2+)</name>
        <dbReference type="ChEBI" id="CHEBI:29105"/>
        <label>1</label>
        <note>catalytic</note>
    </ligand>
</feature>
<feature type="binding site" evidence="2">
    <location>
        <position position="658"/>
    </location>
    <ligand>
        <name>Zn(2+)</name>
        <dbReference type="ChEBI" id="CHEBI:29105"/>
        <label>2</label>
    </ligand>
</feature>
<feature type="binding site" evidence="2">
    <location>
        <position position="662"/>
    </location>
    <ligand>
        <name>Zn(2+)</name>
        <dbReference type="ChEBI" id="CHEBI:29105"/>
        <label>2</label>
    </ligand>
</feature>
<feature type="binding site" evidence="3">
    <location>
        <position position="671"/>
    </location>
    <ligand>
        <name>Zn(2+)</name>
        <dbReference type="ChEBI" id="CHEBI:29105"/>
        <label>1</label>
        <note>catalytic</note>
    </ligand>
</feature>
<feature type="binding site" evidence="2">
    <location>
        <position position="733"/>
    </location>
    <ligand>
        <name>Zn(2+)</name>
        <dbReference type="ChEBI" id="CHEBI:29105"/>
        <label>1</label>
        <note>catalytic</note>
    </ligand>
</feature>
<feature type="sequence conflict" description="In Ref. 4; AAK64167." evidence="5" ref="4">
    <original>S</original>
    <variation>N</variation>
    <location>
        <position position="763"/>
    </location>
</feature>
<dbReference type="EC" id="2.1.1.14"/>
<dbReference type="EMBL" id="AJ608674">
    <property type="protein sequence ID" value="CAE55864.1"/>
    <property type="molecule type" value="mRNA"/>
</dbReference>
<dbReference type="EMBL" id="AC009540">
    <property type="protein sequence ID" value="AAF00639.1"/>
    <property type="molecule type" value="Genomic_DNA"/>
</dbReference>
<dbReference type="EMBL" id="CP002686">
    <property type="protein sequence ID" value="AEE73989.1"/>
    <property type="molecule type" value="Genomic_DNA"/>
</dbReference>
<dbReference type="EMBL" id="CP002686">
    <property type="protein sequence ID" value="AEE73990.1"/>
    <property type="molecule type" value="Genomic_DNA"/>
</dbReference>
<dbReference type="EMBL" id="CP002686">
    <property type="protein sequence ID" value="AEE73991.1"/>
    <property type="molecule type" value="Genomic_DNA"/>
</dbReference>
<dbReference type="EMBL" id="AY040010">
    <property type="protein sequence ID" value="AAK64167.1"/>
    <property type="molecule type" value="mRNA"/>
</dbReference>
<dbReference type="EMBL" id="AY150385">
    <property type="protein sequence ID" value="AAN12930.1"/>
    <property type="molecule type" value="mRNA"/>
</dbReference>
<dbReference type="EMBL" id="AY084559">
    <property type="protein sequence ID" value="AAM61126.1"/>
    <property type="molecule type" value="mRNA"/>
</dbReference>
<dbReference type="RefSeq" id="NP_001118564.1">
    <property type="nucleotide sequence ID" value="NM_001125092.1"/>
</dbReference>
<dbReference type="RefSeq" id="NP_187028.1">
    <property type="nucleotide sequence ID" value="NM_111249.5"/>
</dbReference>
<dbReference type="RefSeq" id="NP_850507.1">
    <property type="nucleotide sequence ID" value="NM_180176.4"/>
</dbReference>
<dbReference type="SMR" id="Q9SRV5"/>
<dbReference type="BioGRID" id="6480">
    <property type="interactions" value="7"/>
</dbReference>
<dbReference type="FunCoup" id="Q9SRV5">
    <property type="interactions" value="959"/>
</dbReference>
<dbReference type="IntAct" id="Q9SRV5">
    <property type="interactions" value="1"/>
</dbReference>
<dbReference type="MINT" id="Q9SRV5"/>
<dbReference type="STRING" id="3702.Q9SRV5"/>
<dbReference type="iPTMnet" id="Q9SRV5"/>
<dbReference type="MetOSite" id="Q9SRV5"/>
<dbReference type="PaxDb" id="3702-AT3G03780.1"/>
<dbReference type="ProteomicsDB" id="232235"/>
<dbReference type="DNASU" id="821147"/>
<dbReference type="EnsemblPlants" id="AT3G03780.1">
    <property type="protein sequence ID" value="AT3G03780.1"/>
    <property type="gene ID" value="AT3G03780"/>
</dbReference>
<dbReference type="EnsemblPlants" id="AT3G03780.2">
    <property type="protein sequence ID" value="AT3G03780.2"/>
    <property type="gene ID" value="AT3G03780"/>
</dbReference>
<dbReference type="EnsemblPlants" id="AT3G03780.3">
    <property type="protein sequence ID" value="AT3G03780.3"/>
    <property type="gene ID" value="AT3G03780"/>
</dbReference>
<dbReference type="GeneID" id="821147"/>
<dbReference type="Gramene" id="AT3G03780.1">
    <property type="protein sequence ID" value="AT3G03780.1"/>
    <property type="gene ID" value="AT3G03780"/>
</dbReference>
<dbReference type="Gramene" id="AT3G03780.2">
    <property type="protein sequence ID" value="AT3G03780.2"/>
    <property type="gene ID" value="AT3G03780"/>
</dbReference>
<dbReference type="Gramene" id="AT3G03780.3">
    <property type="protein sequence ID" value="AT3G03780.3"/>
    <property type="gene ID" value="AT3G03780"/>
</dbReference>
<dbReference type="KEGG" id="ath:AT3G03780"/>
<dbReference type="Araport" id="AT3G03780"/>
<dbReference type="TAIR" id="AT3G03780">
    <property type="gene designation" value="MS2"/>
</dbReference>
<dbReference type="eggNOG" id="KOG2263">
    <property type="taxonomic scope" value="Eukaryota"/>
</dbReference>
<dbReference type="HOGENOM" id="CLU_013175_0_0_1"/>
<dbReference type="InParanoid" id="Q9SRV5"/>
<dbReference type="OMA" id="TCVQLDE"/>
<dbReference type="OrthoDB" id="1053771at2759"/>
<dbReference type="PhylomeDB" id="Q9SRV5"/>
<dbReference type="BioCyc" id="ARA:AT3G03780-MONOMER"/>
<dbReference type="BioCyc" id="MetaCyc:AT3G03780-MONOMER"/>
<dbReference type="SABIO-RK" id="Q9SRV5"/>
<dbReference type="UniPathway" id="UPA00051">
    <property type="reaction ID" value="UER00082"/>
</dbReference>
<dbReference type="CD-CODE" id="4299E36E">
    <property type="entry name" value="Nucleolus"/>
</dbReference>
<dbReference type="PRO" id="PR:Q9SRV5"/>
<dbReference type="Proteomes" id="UP000006548">
    <property type="component" value="Chromosome 3"/>
</dbReference>
<dbReference type="ExpressionAtlas" id="Q9SRV5">
    <property type="expression patterns" value="baseline and differential"/>
</dbReference>
<dbReference type="GO" id="GO:0048046">
    <property type="term" value="C:apoplast"/>
    <property type="evidence" value="ECO:0007005"/>
    <property type="project" value="TAIR"/>
</dbReference>
<dbReference type="GO" id="GO:0009507">
    <property type="term" value="C:chloroplast"/>
    <property type="evidence" value="ECO:0007005"/>
    <property type="project" value="TAIR"/>
</dbReference>
<dbReference type="GO" id="GO:0009941">
    <property type="term" value="C:chloroplast envelope"/>
    <property type="evidence" value="ECO:0007005"/>
    <property type="project" value="TAIR"/>
</dbReference>
<dbReference type="GO" id="GO:0005829">
    <property type="term" value="C:cytosol"/>
    <property type="evidence" value="ECO:0000314"/>
    <property type="project" value="TAIR"/>
</dbReference>
<dbReference type="GO" id="GO:0005886">
    <property type="term" value="C:plasma membrane"/>
    <property type="evidence" value="ECO:0007005"/>
    <property type="project" value="TAIR"/>
</dbReference>
<dbReference type="GO" id="GO:0009506">
    <property type="term" value="C:plasmodesma"/>
    <property type="evidence" value="ECO:0007005"/>
    <property type="project" value="TAIR"/>
</dbReference>
<dbReference type="GO" id="GO:0003871">
    <property type="term" value="F:5-methyltetrahydropteroyltriglutamate-homocysteine S-methyltransferase activity"/>
    <property type="evidence" value="ECO:0007669"/>
    <property type="project" value="UniProtKB-EC"/>
</dbReference>
<dbReference type="GO" id="GO:0008705">
    <property type="term" value="F:methionine synthase activity"/>
    <property type="evidence" value="ECO:0000314"/>
    <property type="project" value="TAIR"/>
</dbReference>
<dbReference type="GO" id="GO:0003729">
    <property type="term" value="F:mRNA binding"/>
    <property type="evidence" value="ECO:0000314"/>
    <property type="project" value="TAIR"/>
</dbReference>
<dbReference type="GO" id="GO:0008270">
    <property type="term" value="F:zinc ion binding"/>
    <property type="evidence" value="ECO:0007669"/>
    <property type="project" value="InterPro"/>
</dbReference>
<dbReference type="GO" id="GO:0009086">
    <property type="term" value="P:methionine biosynthetic process"/>
    <property type="evidence" value="ECO:0000315"/>
    <property type="project" value="TAIR"/>
</dbReference>
<dbReference type="GO" id="GO:0032259">
    <property type="term" value="P:methylation"/>
    <property type="evidence" value="ECO:0007669"/>
    <property type="project" value="UniProtKB-KW"/>
</dbReference>
<dbReference type="CDD" id="cd03311">
    <property type="entry name" value="CIMS_C_terminal_like"/>
    <property type="match status" value="1"/>
</dbReference>
<dbReference type="CDD" id="cd03312">
    <property type="entry name" value="CIMS_N_terminal_like"/>
    <property type="match status" value="1"/>
</dbReference>
<dbReference type="FunFam" id="3.20.20.210:FF:000002">
    <property type="entry name" value="5-methyltetrahydropteroyltriglutamate--homocysteine methyltransferase"/>
    <property type="match status" value="1"/>
</dbReference>
<dbReference type="FunFam" id="3.20.20.210:FF:000003">
    <property type="entry name" value="5-methyltetrahydropteroyltriglutamate--homocysteine methyltransferase"/>
    <property type="match status" value="1"/>
</dbReference>
<dbReference type="Gene3D" id="3.20.20.210">
    <property type="match status" value="2"/>
</dbReference>
<dbReference type="HAMAP" id="MF_00172">
    <property type="entry name" value="Meth_synth"/>
    <property type="match status" value="1"/>
</dbReference>
<dbReference type="InterPro" id="IPR013215">
    <property type="entry name" value="Cbl-indep_Met_Synth_N"/>
</dbReference>
<dbReference type="InterPro" id="IPR006276">
    <property type="entry name" value="Cobalamin-indep_Met_synthase"/>
</dbReference>
<dbReference type="InterPro" id="IPR002629">
    <property type="entry name" value="Met_Synth_C/arc"/>
</dbReference>
<dbReference type="InterPro" id="IPR038071">
    <property type="entry name" value="UROD/MetE-like_sf"/>
</dbReference>
<dbReference type="NCBIfam" id="TIGR01371">
    <property type="entry name" value="met_syn_B12ind"/>
    <property type="match status" value="1"/>
</dbReference>
<dbReference type="NCBIfam" id="NF003556">
    <property type="entry name" value="PRK05222.1"/>
    <property type="match status" value="1"/>
</dbReference>
<dbReference type="PANTHER" id="PTHR30519">
    <property type="entry name" value="5-METHYLTETRAHYDROPTEROYLTRIGLUTAMATE--HOMOCYSTEINE METHYLTRANSFERASE"/>
    <property type="match status" value="1"/>
</dbReference>
<dbReference type="Pfam" id="PF08267">
    <property type="entry name" value="Meth_synt_1"/>
    <property type="match status" value="1"/>
</dbReference>
<dbReference type="Pfam" id="PF01717">
    <property type="entry name" value="Meth_synt_2"/>
    <property type="match status" value="1"/>
</dbReference>
<dbReference type="PIRSF" id="PIRSF000382">
    <property type="entry name" value="MeTrfase_B12_ind"/>
    <property type="match status" value="1"/>
</dbReference>
<dbReference type="SUPFAM" id="SSF51726">
    <property type="entry name" value="UROD/MetE-like"/>
    <property type="match status" value="2"/>
</dbReference>
<gene>
    <name type="primary">MS2</name>
    <name type="ordered locus">At3g03780</name>
    <name type="ORF">F20H23.19</name>
</gene>
<comment type="function">
    <text evidence="4">Catalyzes the transfer of a methyl group from 5-methyltetrahydrofolate to homocysteine resulting in methionine formation.</text>
</comment>
<comment type="catalytic activity">
    <reaction>
        <text>5-methyltetrahydropteroyltri-L-glutamate + L-homocysteine = tetrahydropteroyltri-L-glutamate + L-methionine</text>
        <dbReference type="Rhea" id="RHEA:21196"/>
        <dbReference type="ChEBI" id="CHEBI:57844"/>
        <dbReference type="ChEBI" id="CHEBI:58140"/>
        <dbReference type="ChEBI" id="CHEBI:58199"/>
        <dbReference type="ChEBI" id="CHEBI:58207"/>
        <dbReference type="EC" id="2.1.1.14"/>
    </reaction>
</comment>
<comment type="cofactor">
    <cofactor evidence="1">
        <name>Zn(2+)</name>
        <dbReference type="ChEBI" id="CHEBI:29105"/>
    </cofactor>
    <text evidence="1">Binds 2 Zn(2+) ions per subunit.</text>
</comment>
<comment type="biophysicochemical properties">
    <kinetics>
        <KM evidence="4">60 uM for 5-methyltetrahydrofolate</KM>
        <Vmax evidence="4">20.7 nmol/min/mg enzyme toward 5-methyltetrahydrofolate</Vmax>
    </kinetics>
</comment>
<comment type="pathway">
    <text>Amino-acid biosynthesis; L-methionine biosynthesis via de novo pathway; L-methionine from L-homocysteine (MetE route): step 1/1.</text>
</comment>
<comment type="subcellular location">
    <subcellularLocation>
        <location evidence="4">Cytoplasm</location>
        <location evidence="4">Cytosol</location>
    </subcellularLocation>
</comment>
<comment type="tissue specificity">
    <text evidence="4">Expressed in leaves, stems and siliques.</text>
</comment>
<comment type="similarity">
    <text evidence="5">Belongs to the vitamin-B12 independent methionine synthase family.</text>
</comment>
<sequence length="765" mass="84584">MASHIVGYPRMGPKRELKFALESFWDGKSSADDLQKVSADLRSDIWKQMSAAGIKYIPSNTFSHYDQVLDTTAMLGAVPSRYGFTSGEIGLDVYFSMARGNASVPAMEMTKWFDTNYHYIVPELGPEVKFSYASHKAVNEYKEAKALGVETVPVLVGPVSYLLLSKLAKGVDKSFDLLSLLPKILPVYKEVIAELKAAGASWIQLDEPLFVMDLEGHKLQAFSGAYAELESTLSGLNVLVETYFADIPAEAYKTLTSLKGVTAFGFDLVRGTKTIDLIKSGFPQGKYLFAGVVDGRNIWANDLAASLITLQSLEGVVGKDKLVVSTSCSLLHTAVDLINETKLDAEIKSWLAFAAQKVVEVDALAKALAGQTNESFFTANADALSSRRSSPRVTNESVQKAAAALKGSDHRRTTEVSARLDAQQKKLNLPILPTTTIGSFPQTVELRRVRREYKAKKISEEDYVKAIKEEIKKVVDIQEDLDIDVLVHGEPERNDMVEYFGEQLSGFAFTANGWVQSYGSRCVKPPVIYGDVSRPKPMTVFWSSTAQSMTKRPMKGMLTGPVTILNWSFVRNDQPRHETCYQIALAIKDEVEDLEKGGIGVIQIDEAALREGLPLRKAEHSFYLDWAVHSFRITNCGVQDSTQIHTHMCYSNFNDIIHSIIDMDADVITIENSRSDEKLLSVFREGVKYGAGIGPGVYDIHSPRIPSTDEIADRINKMLAVLEQNILWVNPDCGLKTRKYTEVKPALKAMVDAAKLIRSQLGSAK</sequence>
<protein>
    <recommendedName>
        <fullName>5-methyltetrahydropteroyltriglutamate--homocysteine methyltransferase 2</fullName>
        <ecNumber>2.1.1.14</ecNumber>
    </recommendedName>
    <alternativeName>
        <fullName>Cobalamin-independent methionine synthase 2</fullName>
        <shortName>AtMS2</shortName>
    </alternativeName>
</protein>